<keyword id="KW-0378">Hydrolase</keyword>
<protein>
    <recommendedName>
        <fullName>6-phosphogluconolactonase</fullName>
        <shortName>6PGL</shortName>
        <ecNumber>3.1.1.31</ecNumber>
    </recommendedName>
</protein>
<accession>Q9ZKB1</accession>
<evidence type="ECO:0000305" key="1"/>
<name>6PGL_HELPJ</name>
<proteinExistence type="inferred from homology"/>
<organism>
    <name type="scientific">Helicobacter pylori (strain J99 / ATCC 700824)</name>
    <name type="common">Campylobacter pylori J99</name>
    <dbReference type="NCBI Taxonomy" id="85963"/>
    <lineage>
        <taxon>Bacteria</taxon>
        <taxon>Pseudomonadati</taxon>
        <taxon>Campylobacterota</taxon>
        <taxon>Epsilonproteobacteria</taxon>
        <taxon>Campylobacterales</taxon>
        <taxon>Helicobacteraceae</taxon>
        <taxon>Helicobacter</taxon>
    </lineage>
</organism>
<reference key="1">
    <citation type="journal article" date="1999" name="Nature">
        <title>Genomic sequence comparison of two unrelated isolates of the human gastric pathogen Helicobacter pylori.</title>
        <authorList>
            <person name="Alm R.A."/>
            <person name="Ling L.-S.L."/>
            <person name="Moir D.T."/>
            <person name="King B.L."/>
            <person name="Brown E.D."/>
            <person name="Doig P.C."/>
            <person name="Smith D.R."/>
            <person name="Noonan B."/>
            <person name="Guild B.C."/>
            <person name="deJonge B.L."/>
            <person name="Carmel G."/>
            <person name="Tummino P.J."/>
            <person name="Caruso A."/>
            <person name="Uria-Nickelsen M."/>
            <person name="Mills D.M."/>
            <person name="Ives C."/>
            <person name="Gibson R."/>
            <person name="Merberg D."/>
            <person name="Mills S.D."/>
            <person name="Jiang Q."/>
            <person name="Taylor D.E."/>
            <person name="Vovis G.F."/>
            <person name="Trust T.J."/>
        </authorList>
    </citation>
    <scope>NUCLEOTIDE SEQUENCE [LARGE SCALE GENOMIC DNA]</scope>
    <source>
        <strain>J99 / ATCC 700824</strain>
    </source>
</reference>
<gene>
    <name type="primary">pgl</name>
    <name type="synonym">devB</name>
    <name type="ordered locus">jhp_1028</name>
</gene>
<sequence>MGYQLFEFENLEDCHKALIERFKEFFNAALKKHHQVSVAFSGGRSPISLLQKLSVLDLKWHECLISLVDERIIEASHEDSNAKLLHDYLLQNNALKASFTPLLPEKISGDTNELLDFANQHFKQPHLAILGMGTDGHTASLFPETSAFLNEEKENIVLTKPTNAPYERLSMSINALENCEKLFLSISGVEKRGVLEKALKENAPYSLPIARILHSKKVTTEVFYAKN</sequence>
<feature type="chain" id="PRO_0000090096" description="6-phosphogluconolactonase">
    <location>
        <begin position="1"/>
        <end position="227"/>
    </location>
</feature>
<comment type="function">
    <text>Hydrolysis of 6-phosphogluconolactone to 6-phosphogluconate.</text>
</comment>
<comment type="catalytic activity">
    <reaction>
        <text>6-phospho-D-glucono-1,5-lactone + H2O = 6-phospho-D-gluconate + H(+)</text>
        <dbReference type="Rhea" id="RHEA:12556"/>
        <dbReference type="ChEBI" id="CHEBI:15377"/>
        <dbReference type="ChEBI" id="CHEBI:15378"/>
        <dbReference type="ChEBI" id="CHEBI:57955"/>
        <dbReference type="ChEBI" id="CHEBI:58759"/>
        <dbReference type="EC" id="3.1.1.31"/>
    </reaction>
</comment>
<comment type="pathway">
    <text>Carbohydrate degradation; pentose phosphate pathway; D-ribulose 5-phosphate from D-glucose 6-phosphate (oxidative stage): step 2/3.</text>
</comment>
<comment type="similarity">
    <text evidence="1">Belongs to the glucosamine/galactosamine-6-phosphate isomerase family. 6-phosphogluconolactonase subfamily.</text>
</comment>
<dbReference type="EC" id="3.1.1.31"/>
<dbReference type="EMBL" id="AE001439">
    <property type="protein sequence ID" value="AAD06599.1"/>
    <property type="molecule type" value="Genomic_DNA"/>
</dbReference>
<dbReference type="PIR" id="G71859">
    <property type="entry name" value="G71859"/>
</dbReference>
<dbReference type="RefSeq" id="WP_000542135.1">
    <property type="nucleotide sequence ID" value="NC_000921.1"/>
</dbReference>
<dbReference type="SMR" id="Q9ZKB1"/>
<dbReference type="KEGG" id="hpj:jhp_1028"/>
<dbReference type="PATRIC" id="fig|85963.30.peg.1563"/>
<dbReference type="eggNOG" id="COG0363">
    <property type="taxonomic scope" value="Bacteria"/>
</dbReference>
<dbReference type="UniPathway" id="UPA00115">
    <property type="reaction ID" value="UER00409"/>
</dbReference>
<dbReference type="Proteomes" id="UP000000804">
    <property type="component" value="Chromosome"/>
</dbReference>
<dbReference type="GO" id="GO:0017057">
    <property type="term" value="F:6-phosphogluconolactonase activity"/>
    <property type="evidence" value="ECO:0007669"/>
    <property type="project" value="UniProtKB-EC"/>
</dbReference>
<dbReference type="GO" id="GO:0005975">
    <property type="term" value="P:carbohydrate metabolic process"/>
    <property type="evidence" value="ECO:0007669"/>
    <property type="project" value="InterPro"/>
</dbReference>
<dbReference type="GO" id="GO:0006098">
    <property type="term" value="P:pentose-phosphate shunt"/>
    <property type="evidence" value="ECO:0007669"/>
    <property type="project" value="UniProtKB-UniPathway"/>
</dbReference>
<dbReference type="CDD" id="cd01400">
    <property type="entry name" value="6PGL"/>
    <property type="match status" value="1"/>
</dbReference>
<dbReference type="FunFam" id="3.40.50.1360:FF:000033">
    <property type="entry name" value="6-phosphogluconolactonase"/>
    <property type="match status" value="1"/>
</dbReference>
<dbReference type="Gene3D" id="3.40.50.1360">
    <property type="match status" value="1"/>
</dbReference>
<dbReference type="InterPro" id="IPR005900">
    <property type="entry name" value="6-phosphogluconolactonase_DevB"/>
</dbReference>
<dbReference type="InterPro" id="IPR006148">
    <property type="entry name" value="Glc/Gal-6P_isomerase"/>
</dbReference>
<dbReference type="InterPro" id="IPR037171">
    <property type="entry name" value="NagB/RpiA_transferase-like"/>
</dbReference>
<dbReference type="InterPro" id="IPR039104">
    <property type="entry name" value="PGLS"/>
</dbReference>
<dbReference type="NCBIfam" id="TIGR01198">
    <property type="entry name" value="pgl"/>
    <property type="match status" value="1"/>
</dbReference>
<dbReference type="PANTHER" id="PTHR11054">
    <property type="entry name" value="6-PHOSPHOGLUCONOLACTONASE"/>
    <property type="match status" value="1"/>
</dbReference>
<dbReference type="PANTHER" id="PTHR11054:SF0">
    <property type="entry name" value="6-PHOSPHOGLUCONOLACTONASE"/>
    <property type="match status" value="1"/>
</dbReference>
<dbReference type="Pfam" id="PF01182">
    <property type="entry name" value="Glucosamine_iso"/>
    <property type="match status" value="1"/>
</dbReference>
<dbReference type="SUPFAM" id="SSF100950">
    <property type="entry name" value="NagB/RpiA/CoA transferase-like"/>
    <property type="match status" value="1"/>
</dbReference>